<comment type="similarity">
    <text evidence="1">Belongs to the universal stress protein A family.</text>
</comment>
<feature type="chain" id="PRO_0000128674" description="Universal stress protein Jhp_0027">
    <location>
        <begin position="1"/>
        <end position="137"/>
    </location>
</feature>
<dbReference type="EMBL" id="AE001439">
    <property type="protein sequence ID" value="AAD05611.1"/>
    <property type="molecule type" value="Genomic_DNA"/>
</dbReference>
<dbReference type="RefSeq" id="WP_001023005.1">
    <property type="nucleotide sequence ID" value="NZ_CP011330.1"/>
</dbReference>
<dbReference type="SMR" id="P64650"/>
<dbReference type="KEGG" id="hpj:jhp_0027"/>
<dbReference type="PATRIC" id="fig|85963.30.peg.1013"/>
<dbReference type="eggNOG" id="COG0589">
    <property type="taxonomic scope" value="Bacteria"/>
</dbReference>
<dbReference type="Proteomes" id="UP000000804">
    <property type="component" value="Chromosome"/>
</dbReference>
<dbReference type="CDD" id="cd00293">
    <property type="entry name" value="USP-like"/>
    <property type="match status" value="1"/>
</dbReference>
<dbReference type="Gene3D" id="3.40.50.620">
    <property type="entry name" value="HUPs"/>
    <property type="match status" value="1"/>
</dbReference>
<dbReference type="InterPro" id="IPR014729">
    <property type="entry name" value="Rossmann-like_a/b/a_fold"/>
</dbReference>
<dbReference type="InterPro" id="IPR006016">
    <property type="entry name" value="UspA"/>
</dbReference>
<dbReference type="PANTHER" id="PTHR46268">
    <property type="entry name" value="STRESS RESPONSE PROTEIN NHAX"/>
    <property type="match status" value="1"/>
</dbReference>
<dbReference type="PANTHER" id="PTHR46268:SF15">
    <property type="entry name" value="UNIVERSAL STRESS PROTEIN HP_0031"/>
    <property type="match status" value="1"/>
</dbReference>
<dbReference type="Pfam" id="PF00582">
    <property type="entry name" value="Usp"/>
    <property type="match status" value="1"/>
</dbReference>
<dbReference type="SUPFAM" id="SSF52402">
    <property type="entry name" value="Adenine nucleotide alpha hydrolases-like"/>
    <property type="match status" value="1"/>
</dbReference>
<accession>P64650</accession>
<accession>O24874</accession>
<protein>
    <recommendedName>
        <fullName>Universal stress protein Jhp_0027</fullName>
        <shortName>USP Jhp_0027</shortName>
    </recommendedName>
</protein>
<sequence>MNILFGISDTQECYNAIKFAVKLAHSLKEVRFTLLHVSMEVFIYSESGMMDYGQTEALEEEKAKALLKQFEDAFKKENIECESVLKSGDLIDVVLDMAKDYDLLLIGASESNLLYRLFISHQNSLVEQSSIPVVIAK</sequence>
<gene>
    <name type="ordered locus">jhp_0027</name>
</gene>
<evidence type="ECO:0000305" key="1"/>
<name>Y027_HELPJ</name>
<proteinExistence type="inferred from homology"/>
<reference key="1">
    <citation type="journal article" date="1999" name="Nature">
        <title>Genomic sequence comparison of two unrelated isolates of the human gastric pathogen Helicobacter pylori.</title>
        <authorList>
            <person name="Alm R.A."/>
            <person name="Ling L.-S.L."/>
            <person name="Moir D.T."/>
            <person name="King B.L."/>
            <person name="Brown E.D."/>
            <person name="Doig P.C."/>
            <person name="Smith D.R."/>
            <person name="Noonan B."/>
            <person name="Guild B.C."/>
            <person name="deJonge B.L."/>
            <person name="Carmel G."/>
            <person name="Tummino P.J."/>
            <person name="Caruso A."/>
            <person name="Uria-Nickelsen M."/>
            <person name="Mills D.M."/>
            <person name="Ives C."/>
            <person name="Gibson R."/>
            <person name="Merberg D."/>
            <person name="Mills S.D."/>
            <person name="Jiang Q."/>
            <person name="Taylor D.E."/>
            <person name="Vovis G.F."/>
            <person name="Trust T.J."/>
        </authorList>
    </citation>
    <scope>NUCLEOTIDE SEQUENCE [LARGE SCALE GENOMIC DNA]</scope>
    <source>
        <strain>J99 / ATCC 700824</strain>
    </source>
</reference>
<organism>
    <name type="scientific">Helicobacter pylori (strain J99 / ATCC 700824)</name>
    <name type="common">Campylobacter pylori J99</name>
    <dbReference type="NCBI Taxonomy" id="85963"/>
    <lineage>
        <taxon>Bacteria</taxon>
        <taxon>Pseudomonadati</taxon>
        <taxon>Campylobacterota</taxon>
        <taxon>Epsilonproteobacteria</taxon>
        <taxon>Campylobacterales</taxon>
        <taxon>Helicobacteraceae</taxon>
        <taxon>Helicobacter</taxon>
    </lineage>
</organism>